<proteinExistence type="evidence at protein level"/>
<keyword id="KW-0025">Alternative splicing</keyword>
<keyword id="KW-1185">Reference proteome</keyword>
<keyword id="KW-0677">Repeat</keyword>
<protein>
    <recommendedName>
        <fullName>Synaptotagmin-16</fullName>
    </recommendedName>
    <alternativeName>
        <fullName>Synaptotagmin 14-like protein</fullName>
    </alternativeName>
    <alternativeName>
        <fullName>Synaptotagmin XIV-related protein</fullName>
    </alternativeName>
</protein>
<name>SYT16_MOUSE</name>
<reference key="1">
    <citation type="journal article" date="2003" name="J. Biochem.">
        <title>Molecular cloning, expression, and characterization of a novel class of synaptotagmin (Syt XIV) conserved from Drosophila to humans.</title>
        <authorList>
            <person name="Fukuda M."/>
        </authorList>
    </citation>
    <scope>NUCLEOTIDE SEQUENCE [MRNA] (ISOFORM 1)</scope>
    <scope>FUNCTION</scope>
    <scope>SUBUNIT</scope>
    <scope>TISSUE SPECIFICITY</scope>
    <scope>DEVELOPMENTAL STAGE</scope>
    <source>
        <strain>BALB/cJ</strain>
    </source>
</reference>
<reference key="2">
    <citation type="journal article" date="2005" name="Science">
        <title>The transcriptional landscape of the mammalian genome.</title>
        <authorList>
            <person name="Carninci P."/>
            <person name="Kasukawa T."/>
            <person name="Katayama S."/>
            <person name="Gough J."/>
            <person name="Frith M.C."/>
            <person name="Maeda N."/>
            <person name="Oyama R."/>
            <person name="Ravasi T."/>
            <person name="Lenhard B."/>
            <person name="Wells C."/>
            <person name="Kodzius R."/>
            <person name="Shimokawa K."/>
            <person name="Bajic V.B."/>
            <person name="Brenner S.E."/>
            <person name="Batalov S."/>
            <person name="Forrest A.R."/>
            <person name="Zavolan M."/>
            <person name="Davis M.J."/>
            <person name="Wilming L.G."/>
            <person name="Aidinis V."/>
            <person name="Allen J.E."/>
            <person name="Ambesi-Impiombato A."/>
            <person name="Apweiler R."/>
            <person name="Aturaliya R.N."/>
            <person name="Bailey T.L."/>
            <person name="Bansal M."/>
            <person name="Baxter L."/>
            <person name="Beisel K.W."/>
            <person name="Bersano T."/>
            <person name="Bono H."/>
            <person name="Chalk A.M."/>
            <person name="Chiu K.P."/>
            <person name="Choudhary V."/>
            <person name="Christoffels A."/>
            <person name="Clutterbuck D.R."/>
            <person name="Crowe M.L."/>
            <person name="Dalla E."/>
            <person name="Dalrymple B.P."/>
            <person name="de Bono B."/>
            <person name="Della Gatta G."/>
            <person name="di Bernardo D."/>
            <person name="Down T."/>
            <person name="Engstrom P."/>
            <person name="Fagiolini M."/>
            <person name="Faulkner G."/>
            <person name="Fletcher C.F."/>
            <person name="Fukushima T."/>
            <person name="Furuno M."/>
            <person name="Futaki S."/>
            <person name="Gariboldi M."/>
            <person name="Georgii-Hemming P."/>
            <person name="Gingeras T.R."/>
            <person name="Gojobori T."/>
            <person name="Green R.E."/>
            <person name="Gustincich S."/>
            <person name="Harbers M."/>
            <person name="Hayashi Y."/>
            <person name="Hensch T.K."/>
            <person name="Hirokawa N."/>
            <person name="Hill D."/>
            <person name="Huminiecki L."/>
            <person name="Iacono M."/>
            <person name="Ikeo K."/>
            <person name="Iwama A."/>
            <person name="Ishikawa T."/>
            <person name="Jakt M."/>
            <person name="Kanapin A."/>
            <person name="Katoh M."/>
            <person name="Kawasawa Y."/>
            <person name="Kelso J."/>
            <person name="Kitamura H."/>
            <person name="Kitano H."/>
            <person name="Kollias G."/>
            <person name="Krishnan S.P."/>
            <person name="Kruger A."/>
            <person name="Kummerfeld S.K."/>
            <person name="Kurochkin I.V."/>
            <person name="Lareau L.F."/>
            <person name="Lazarevic D."/>
            <person name="Lipovich L."/>
            <person name="Liu J."/>
            <person name="Liuni S."/>
            <person name="McWilliam S."/>
            <person name="Madan Babu M."/>
            <person name="Madera M."/>
            <person name="Marchionni L."/>
            <person name="Matsuda H."/>
            <person name="Matsuzawa S."/>
            <person name="Miki H."/>
            <person name="Mignone F."/>
            <person name="Miyake S."/>
            <person name="Morris K."/>
            <person name="Mottagui-Tabar S."/>
            <person name="Mulder N."/>
            <person name="Nakano N."/>
            <person name="Nakauchi H."/>
            <person name="Ng P."/>
            <person name="Nilsson R."/>
            <person name="Nishiguchi S."/>
            <person name="Nishikawa S."/>
            <person name="Nori F."/>
            <person name="Ohara O."/>
            <person name="Okazaki Y."/>
            <person name="Orlando V."/>
            <person name="Pang K.C."/>
            <person name="Pavan W.J."/>
            <person name="Pavesi G."/>
            <person name="Pesole G."/>
            <person name="Petrovsky N."/>
            <person name="Piazza S."/>
            <person name="Reed J."/>
            <person name="Reid J.F."/>
            <person name="Ring B.Z."/>
            <person name="Ringwald M."/>
            <person name="Rost B."/>
            <person name="Ruan Y."/>
            <person name="Salzberg S.L."/>
            <person name="Sandelin A."/>
            <person name="Schneider C."/>
            <person name="Schoenbach C."/>
            <person name="Sekiguchi K."/>
            <person name="Semple C.A."/>
            <person name="Seno S."/>
            <person name="Sessa L."/>
            <person name="Sheng Y."/>
            <person name="Shibata Y."/>
            <person name="Shimada H."/>
            <person name="Shimada K."/>
            <person name="Silva D."/>
            <person name="Sinclair B."/>
            <person name="Sperling S."/>
            <person name="Stupka E."/>
            <person name="Sugiura K."/>
            <person name="Sultana R."/>
            <person name="Takenaka Y."/>
            <person name="Taki K."/>
            <person name="Tammoja K."/>
            <person name="Tan S.L."/>
            <person name="Tang S."/>
            <person name="Taylor M.S."/>
            <person name="Tegner J."/>
            <person name="Teichmann S.A."/>
            <person name="Ueda H.R."/>
            <person name="van Nimwegen E."/>
            <person name="Verardo R."/>
            <person name="Wei C.L."/>
            <person name="Yagi K."/>
            <person name="Yamanishi H."/>
            <person name="Zabarovsky E."/>
            <person name="Zhu S."/>
            <person name="Zimmer A."/>
            <person name="Hide W."/>
            <person name="Bult C."/>
            <person name="Grimmond S.M."/>
            <person name="Teasdale R.D."/>
            <person name="Liu E.T."/>
            <person name="Brusic V."/>
            <person name="Quackenbush J."/>
            <person name="Wahlestedt C."/>
            <person name="Mattick J.S."/>
            <person name="Hume D.A."/>
            <person name="Kai C."/>
            <person name="Sasaki D."/>
            <person name="Tomaru Y."/>
            <person name="Fukuda S."/>
            <person name="Kanamori-Katayama M."/>
            <person name="Suzuki M."/>
            <person name="Aoki J."/>
            <person name="Arakawa T."/>
            <person name="Iida J."/>
            <person name="Imamura K."/>
            <person name="Itoh M."/>
            <person name="Kato T."/>
            <person name="Kawaji H."/>
            <person name="Kawagashira N."/>
            <person name="Kawashima T."/>
            <person name="Kojima M."/>
            <person name="Kondo S."/>
            <person name="Konno H."/>
            <person name="Nakano K."/>
            <person name="Ninomiya N."/>
            <person name="Nishio T."/>
            <person name="Okada M."/>
            <person name="Plessy C."/>
            <person name="Shibata K."/>
            <person name="Shiraki T."/>
            <person name="Suzuki S."/>
            <person name="Tagami M."/>
            <person name="Waki K."/>
            <person name="Watahiki A."/>
            <person name="Okamura-Oho Y."/>
            <person name="Suzuki H."/>
            <person name="Kawai J."/>
            <person name="Hayashizaki Y."/>
        </authorList>
    </citation>
    <scope>NUCLEOTIDE SEQUENCE [LARGE SCALE MRNA] (ISOFORMS 1 AND 2)</scope>
    <source>
        <strain>C57BL/6J</strain>
        <tissue>Olfactory bulb</tissue>
    </source>
</reference>
<reference key="3">
    <citation type="journal article" date="2004" name="Genome Res.">
        <title>The status, quality, and expansion of the NIH full-length cDNA project: the Mammalian Gene Collection (MGC).</title>
        <authorList>
            <consortium name="The MGC Project Team"/>
        </authorList>
    </citation>
    <scope>NUCLEOTIDE SEQUENCE [LARGE SCALE MRNA] (ISOFORM 3)</scope>
    <source>
        <strain>C57BL/6J</strain>
        <tissue>Brain</tissue>
    </source>
</reference>
<organism>
    <name type="scientific">Mus musculus</name>
    <name type="common">Mouse</name>
    <dbReference type="NCBI Taxonomy" id="10090"/>
    <lineage>
        <taxon>Eukaryota</taxon>
        <taxon>Metazoa</taxon>
        <taxon>Chordata</taxon>
        <taxon>Craniata</taxon>
        <taxon>Vertebrata</taxon>
        <taxon>Euteleostomi</taxon>
        <taxon>Mammalia</taxon>
        <taxon>Eutheria</taxon>
        <taxon>Euarchontoglires</taxon>
        <taxon>Glires</taxon>
        <taxon>Rodentia</taxon>
        <taxon>Myomorpha</taxon>
        <taxon>Muroidea</taxon>
        <taxon>Muridae</taxon>
        <taxon>Murinae</taxon>
        <taxon>Mus</taxon>
        <taxon>Mus</taxon>
    </lineage>
</organism>
<feature type="chain" id="PRO_0000258585" description="Synaptotagmin-16">
    <location>
        <begin position="1"/>
        <end position="639"/>
    </location>
</feature>
<feature type="domain" description="C2 1" evidence="1">
    <location>
        <begin position="344"/>
        <end position="463"/>
    </location>
</feature>
<feature type="domain" description="C2 2" evidence="1">
    <location>
        <begin position="499"/>
        <end position="634"/>
    </location>
</feature>
<feature type="region of interest" description="Disordered" evidence="2">
    <location>
        <begin position="95"/>
        <end position="191"/>
    </location>
</feature>
<feature type="region of interest" description="Disordered" evidence="2">
    <location>
        <begin position="470"/>
        <end position="496"/>
    </location>
</feature>
<feature type="compositionally biased region" description="Polar residues" evidence="2">
    <location>
        <begin position="95"/>
        <end position="119"/>
    </location>
</feature>
<feature type="compositionally biased region" description="Pro residues" evidence="2">
    <location>
        <begin position="121"/>
        <end position="134"/>
    </location>
</feature>
<feature type="compositionally biased region" description="Basic and acidic residues" evidence="2">
    <location>
        <begin position="142"/>
        <end position="151"/>
    </location>
</feature>
<feature type="compositionally biased region" description="Acidic residues" evidence="2">
    <location>
        <begin position="174"/>
        <end position="187"/>
    </location>
</feature>
<feature type="compositionally biased region" description="Low complexity" evidence="2">
    <location>
        <begin position="476"/>
        <end position="496"/>
    </location>
</feature>
<feature type="splice variant" id="VSP_021381" description="In isoform 3." evidence="4">
    <location>
        <begin position="1"/>
        <end position="152"/>
    </location>
</feature>
<feature type="splice variant" id="VSP_021382" description="In isoform 2." evidence="5">
    <location>
        <begin position="1"/>
        <end position="105"/>
    </location>
</feature>
<feature type="splice variant" id="VSP_021384" description="In isoform 2." evidence="5">
    <original>SPTLGQQAEDSSSVIPPWPSKIPGAPKPQPVLSSIAEEDHHSERQRCGRQHGSGTLEKVNGRKQ</original>
    <variation>MATDITPEAIGFLSAIGVFVVLLAVLLLFINKKLCSENLRGHPYPEQRGKRKHSRDKTGGHTGT</variation>
    <location>
        <begin position="106"/>
        <end position="169"/>
    </location>
</feature>
<feature type="splice variant" id="VSP_021383" description="In isoform 3." evidence="4">
    <original>GRQHGSGTLEKVNGRKQ</original>
    <variation>MTSKEGGGEGEEIIHN</variation>
    <location>
        <begin position="153"/>
        <end position="169"/>
    </location>
</feature>
<feature type="splice variant" id="VSP_021385" description="In isoform 2." evidence="5">
    <original>E</original>
    <variation>EGIHCSALHCRQGQVN</variation>
    <location>
        <position position="240"/>
    </location>
</feature>
<feature type="sequence conflict" description="In Ref. 2; BAC27947." evidence="6" ref="2">
    <original>Q</original>
    <variation>K</variation>
    <location>
        <position position="111"/>
    </location>
</feature>
<evidence type="ECO:0000255" key="1">
    <source>
        <dbReference type="PROSITE-ProRule" id="PRU00041"/>
    </source>
</evidence>
<evidence type="ECO:0000256" key="2">
    <source>
        <dbReference type="SAM" id="MobiDB-lite"/>
    </source>
</evidence>
<evidence type="ECO:0000269" key="3">
    <source>
    </source>
</evidence>
<evidence type="ECO:0000303" key="4">
    <source>
    </source>
</evidence>
<evidence type="ECO:0000303" key="5">
    <source>
    </source>
</evidence>
<evidence type="ECO:0000305" key="6"/>
<gene>
    <name type="primary">Syt16</name>
    <name type="synonym">Strep14</name>
    <name type="synonym">Syt14l</name>
    <name type="synonym">Syt14r</name>
</gene>
<sequence>MVLTMASQDVQNFFQPLSSWLSRVYEALQQAGDALSASLVLLSKHDSALSDKPEQDLDAAQIQQTYLEDEEQDHDGSPEEASSLFLEEDHFSLSNSDLQDSVQTASPTLGQQAEDSSSVIPPWPSKIPGAPKPQPVLSSIAEEDHHSERQRCGRQHGSGTLEKVNGRKQVNSFGDDEEPSTSSESDEDVTKQFKISVSRSQSFRSGVSEKGKTTELEQKIKCKRLLCTHQEDSAEGSACEDLDRTSQLSYSEILSYEDRPISILPQSPFESRNVRHHGPCRPEMGMVRSLGRPCADGVLETETAFVSRGFEDSYATHSSSLWSPEEQDGTSLQVPHRLLEPISKCGDLDVIFEYRAVTQKLTVTIVRAQGLPDKDRSGVNSWQVHIVLLPSKKQRGKTNIQRGPNPVFKEKVTFTKLEPRDVASCAVRFRLYAARKMTRERMMGEKLFCLSHLHPEGEMKVTLVLEPRSNLSSGESPLSPSVVSHSDSASSTQSLSHGGVPELLVGLSYNATTGRLSVEMIKGSHFRNLAANRAPDTYGKLFLLNCVGQEMSRCKTSIRRGQPNPVYKETFVFQVALFQLSDVTLMISIYSRRTMKRKEMIGWVALGQNSSGEEEQEHWEEMKESKGQQTCRWHTLLES</sequence>
<dbReference type="EMBL" id="AB102950">
    <property type="protein sequence ID" value="BAC76811.1"/>
    <property type="molecule type" value="mRNA"/>
</dbReference>
<dbReference type="EMBL" id="AK032606">
    <property type="protein sequence ID" value="BAC27947.1"/>
    <property type="status" value="ALT_FRAME"/>
    <property type="molecule type" value="mRNA"/>
</dbReference>
<dbReference type="EMBL" id="AK137129">
    <property type="protein sequence ID" value="BAE23245.1"/>
    <property type="molecule type" value="mRNA"/>
</dbReference>
<dbReference type="EMBL" id="BC056932">
    <property type="protein sequence ID" value="AAH56932.1"/>
    <property type="molecule type" value="mRNA"/>
</dbReference>
<dbReference type="CCDS" id="CCDS49089.1">
    <molecule id="Q7TN83-2"/>
</dbReference>
<dbReference type="CCDS" id="CCDS88352.1">
    <molecule id="Q7TN83-1"/>
</dbReference>
<dbReference type="RefSeq" id="NP_001351211.1">
    <molecule id="Q7TN83-1"/>
    <property type="nucleotide sequence ID" value="NM_001364282.1"/>
</dbReference>
<dbReference type="RefSeq" id="NP_001409900.1">
    <molecule id="Q7TN83-1"/>
    <property type="nucleotide sequence ID" value="NM_001422971.1"/>
</dbReference>
<dbReference type="RefSeq" id="NP_001409901.1">
    <molecule id="Q7TN83-1"/>
    <property type="nucleotide sequence ID" value="NM_001422972.1"/>
</dbReference>
<dbReference type="RefSeq" id="NP_001409902.1">
    <molecule id="Q7TN83-1"/>
    <property type="nucleotide sequence ID" value="NM_001422973.1"/>
</dbReference>
<dbReference type="RefSeq" id="NP_766392.2">
    <molecule id="Q7TN83-2"/>
    <property type="nucleotide sequence ID" value="NM_172804.3"/>
</dbReference>
<dbReference type="RefSeq" id="XP_006515903.1">
    <property type="nucleotide sequence ID" value="XM_006515840.3"/>
</dbReference>
<dbReference type="SMR" id="Q7TN83"/>
<dbReference type="BioGRID" id="231962">
    <property type="interactions" value="2"/>
</dbReference>
<dbReference type="FunCoup" id="Q7TN83">
    <property type="interactions" value="380"/>
</dbReference>
<dbReference type="STRING" id="10090.ENSMUSP00000152623"/>
<dbReference type="iPTMnet" id="Q7TN83"/>
<dbReference type="PhosphoSitePlus" id="Q7TN83"/>
<dbReference type="PaxDb" id="10090-ENSMUSP00000106081"/>
<dbReference type="PeptideAtlas" id="Q7TN83"/>
<dbReference type="ProteomicsDB" id="254794">
    <molecule id="Q7TN83-1"/>
</dbReference>
<dbReference type="ProteomicsDB" id="254795">
    <molecule id="Q7TN83-2"/>
</dbReference>
<dbReference type="ProteomicsDB" id="254796">
    <molecule id="Q7TN83-3"/>
</dbReference>
<dbReference type="Antibodypedia" id="60">
    <property type="antibodies" value="129 antibodies from 22 providers"/>
</dbReference>
<dbReference type="DNASU" id="238266"/>
<dbReference type="Ensembl" id="ENSMUST00000221220.2">
    <molecule id="Q7TN83-2"/>
    <property type="protein sequence ID" value="ENSMUSP00000152623.2"/>
    <property type="gene ID" value="ENSMUSG00000044912.12"/>
</dbReference>
<dbReference type="Ensembl" id="ENSMUST00000238790.2">
    <molecule id="Q7TN83-1"/>
    <property type="protein sequence ID" value="ENSMUSP00000158983.2"/>
    <property type="gene ID" value="ENSMUSG00000044912.12"/>
</dbReference>
<dbReference type="GeneID" id="238266"/>
<dbReference type="KEGG" id="mmu:238266"/>
<dbReference type="UCSC" id="uc007nwu.1">
    <molecule id="Q7TN83-2"/>
    <property type="organism name" value="mouse"/>
</dbReference>
<dbReference type="UCSC" id="uc007nwv.1">
    <molecule id="Q7TN83-1"/>
    <property type="organism name" value="mouse"/>
</dbReference>
<dbReference type="AGR" id="MGI:2673872"/>
<dbReference type="CTD" id="83851"/>
<dbReference type="MGI" id="MGI:2673872">
    <property type="gene designation" value="Syt16"/>
</dbReference>
<dbReference type="VEuPathDB" id="HostDB:ENSMUSG00000044912"/>
<dbReference type="eggNOG" id="KOG1028">
    <property type="taxonomic scope" value="Eukaryota"/>
</dbReference>
<dbReference type="GeneTree" id="ENSGT00940000159673"/>
<dbReference type="HOGENOM" id="CLU_023008_6_1_1"/>
<dbReference type="InParanoid" id="Q7TN83"/>
<dbReference type="OMA" id="CAIRFRL"/>
<dbReference type="OrthoDB" id="5978493at2759"/>
<dbReference type="PhylomeDB" id="Q7TN83"/>
<dbReference type="TreeFam" id="TF351132"/>
<dbReference type="BioGRID-ORCS" id="238266">
    <property type="hits" value="2 hits in 78 CRISPR screens"/>
</dbReference>
<dbReference type="ChiTaRS" id="Syt16">
    <property type="organism name" value="mouse"/>
</dbReference>
<dbReference type="PRO" id="PR:Q7TN83"/>
<dbReference type="Proteomes" id="UP000000589">
    <property type="component" value="Chromosome 12"/>
</dbReference>
<dbReference type="RNAct" id="Q7TN83">
    <property type="molecule type" value="protein"/>
</dbReference>
<dbReference type="Bgee" id="ENSMUSG00000044912">
    <property type="expression patterns" value="Expressed in amygdala and 128 other cell types or tissues"/>
</dbReference>
<dbReference type="ExpressionAtlas" id="Q7TN83">
    <property type="expression patterns" value="baseline and differential"/>
</dbReference>
<dbReference type="GO" id="GO:0016020">
    <property type="term" value="C:membrane"/>
    <property type="evidence" value="ECO:0000250"/>
    <property type="project" value="MGI"/>
</dbReference>
<dbReference type="GO" id="GO:0042802">
    <property type="term" value="F:identical protein binding"/>
    <property type="evidence" value="ECO:0000353"/>
    <property type="project" value="MGI"/>
</dbReference>
<dbReference type="GO" id="GO:0005543">
    <property type="term" value="F:phospholipid binding"/>
    <property type="evidence" value="ECO:0000314"/>
    <property type="project" value="MGI"/>
</dbReference>
<dbReference type="CDD" id="cd08389">
    <property type="entry name" value="C2A_Synaptotagmin-14_16"/>
    <property type="match status" value="1"/>
</dbReference>
<dbReference type="CDD" id="cd08408">
    <property type="entry name" value="C2B_Synaptotagmin-14_16"/>
    <property type="match status" value="1"/>
</dbReference>
<dbReference type="FunFam" id="2.60.40.150:FF:000153">
    <property type="entry name" value="Synaptotagmin 16"/>
    <property type="match status" value="1"/>
</dbReference>
<dbReference type="FunFam" id="2.60.40.150:FF:000062">
    <property type="entry name" value="synaptotagmin-14 isoform X1"/>
    <property type="match status" value="1"/>
</dbReference>
<dbReference type="Gene3D" id="2.60.40.150">
    <property type="entry name" value="C2 domain"/>
    <property type="match status" value="2"/>
</dbReference>
<dbReference type="InterPro" id="IPR000008">
    <property type="entry name" value="C2_dom"/>
</dbReference>
<dbReference type="InterPro" id="IPR035892">
    <property type="entry name" value="C2_domain_sf"/>
</dbReference>
<dbReference type="InterPro" id="IPR043541">
    <property type="entry name" value="SYT14/14L/16"/>
</dbReference>
<dbReference type="PANTHER" id="PTHR46129">
    <property type="entry name" value="SYNAPTOTAGMIN 14, ISOFORM D"/>
    <property type="match status" value="1"/>
</dbReference>
<dbReference type="PANTHER" id="PTHR46129:SF4">
    <property type="entry name" value="SYNAPTOTAGMIN-16"/>
    <property type="match status" value="1"/>
</dbReference>
<dbReference type="Pfam" id="PF00168">
    <property type="entry name" value="C2"/>
    <property type="match status" value="2"/>
</dbReference>
<dbReference type="SMART" id="SM00239">
    <property type="entry name" value="C2"/>
    <property type="match status" value="2"/>
</dbReference>
<dbReference type="SUPFAM" id="SSF49562">
    <property type="entry name" value="C2 domain (Calcium/lipid-binding domain, CaLB)"/>
    <property type="match status" value="2"/>
</dbReference>
<dbReference type="PROSITE" id="PS50004">
    <property type="entry name" value="C2"/>
    <property type="match status" value="2"/>
</dbReference>
<accession>Q7TN83</accession>
<accession>Q3UVM4</accession>
<accession>Q6PGM6</accession>
<accession>Q8BJ41</accession>
<comment type="function">
    <text evidence="3">May be involved in the trafficking and exocytosis of secretory vesicles in non-neuronal tissues. Is Ca(2+)-independent.</text>
</comment>
<comment type="subunit">
    <text evidence="3">Homodimer. Can also form heterodimers.</text>
</comment>
<comment type="alternative products">
    <event type="alternative splicing"/>
    <isoform>
        <id>Q7TN83-1</id>
        <name>1</name>
        <sequence type="displayed"/>
    </isoform>
    <isoform>
        <id>Q7TN83-2</id>
        <name>2</name>
        <sequence type="described" ref="VSP_021382 VSP_021384 VSP_021385"/>
    </isoform>
    <isoform>
        <id>Q7TN83-3</id>
        <name>3</name>
        <sequence type="described" ref="VSP_021381 VSP_021383"/>
    </isoform>
</comment>
<comment type="tissue specificity">
    <text evidence="3">Highly expressed in heart and testis. Moderately expressed in kidney.</text>
</comment>
<comment type="developmental stage">
    <text evidence="3">Weakly expressed at 7 dpc and remains constant from 11 dpc to 17 dpc.</text>
</comment>
<comment type="similarity">
    <text evidence="6">Belongs to the synaptotagmin family.</text>
</comment>
<comment type="sequence caution" evidence="6">
    <conflict type="frameshift">
        <sequence resource="EMBL-CDS" id="BAC27947"/>
    </conflict>
</comment>